<comment type="function">
    <text>Essential in pre-tRNA processing. Component of the cleavage and polyadenylation factor (CPF) complex, which plays a key role in polyadenylation-dependent pre-mRNA 3'-end formation and cooperates with cleavage factors including the CFIA complex and NAB4/CFIB. Component of the APT complex, which may be involved in polyadenylation-independent transcript 3'-end formation.</text>
</comment>
<comment type="subunit">
    <text evidence="2">Component of the cleavage and polyadenylation factor (CPF) complex, which is composed of PTI1, SYC1, SSU72, GLC7, MPE1, REF2, PFS2, PTA1, YSH1/BRR5, SWD2, CFT2/YDH1, YTH1, CFT1/YHH1, FIP1 and PAP1. Component of the APT complex, which is a subcomplex of CPF, and is composed of PTI1, SYC1, SSU72, GLC7, REF2, PTA1 and SWD2.</text>
</comment>
<comment type="interaction">
    <interactant intactId="EBI-14145">
        <id>Q01329</id>
    </interactant>
    <interactant intactId="EBI-31412">
        <id>Q12102</id>
        <label>CFT2</label>
    </interactant>
    <organismsDiffer>false</organismsDiffer>
    <experiments>6</experiments>
</comment>
<comment type="interaction">
    <interactant intactId="EBI-14145">
        <id>Q01329</id>
    </interactant>
    <interactant intactId="EBI-6940">
        <id>P45976</id>
        <label>FIP1</label>
    </interactant>
    <organismsDiffer>false</organismsDiffer>
    <experiments>6</experiments>
</comment>
<comment type="interaction">
    <interactant intactId="EBI-14145">
        <id>Q01329</id>
    </interactant>
    <interactant intactId="EBI-12917">
        <id>P29468</id>
        <label>PAP1</label>
    </interactant>
    <organismsDiffer>false</organismsDiffer>
    <experiments>9</experiments>
</comment>
<comment type="interaction">
    <interactant intactId="EBI-14145">
        <id>Q01329</id>
    </interactant>
    <interactant intactId="EBI-23382">
        <id>P39927</id>
        <label>PTI1</label>
    </interactant>
    <organismsDiffer>false</organismsDiffer>
    <experiments>4</experiments>
</comment>
<comment type="interaction">
    <interactant intactId="EBI-14145">
        <id>Q01329</id>
    </interactant>
    <interactant intactId="EBI-18134">
        <id>P53538</id>
        <label>SSU72</label>
    </interactant>
    <organismsDiffer>false</organismsDiffer>
    <experiments>7</experiments>
</comment>
<comment type="interaction">
    <interactant intactId="EBI-14145">
        <id>Q01329</id>
    </interactant>
    <interactant intactId="EBI-38345">
        <id>Q06224</id>
        <label>YSH1</label>
    </interactant>
    <organismsDiffer>false</organismsDiffer>
    <experiments>5</experiments>
</comment>
<comment type="subcellular location">
    <subcellularLocation>
        <location evidence="2">Nucleus</location>
    </subcellularLocation>
</comment>
<comment type="miscellaneous">
    <text evidence="3">Present with 3730 molecules/cell in log phase SD medium.</text>
</comment>
<organism>
    <name type="scientific">Saccharomyces cerevisiae (strain ATCC 204508 / S288c)</name>
    <name type="common">Baker's yeast</name>
    <dbReference type="NCBI Taxonomy" id="559292"/>
    <lineage>
        <taxon>Eukaryota</taxon>
        <taxon>Fungi</taxon>
        <taxon>Dikarya</taxon>
        <taxon>Ascomycota</taxon>
        <taxon>Saccharomycotina</taxon>
        <taxon>Saccharomycetes</taxon>
        <taxon>Saccharomycetales</taxon>
        <taxon>Saccharomycetaceae</taxon>
        <taxon>Saccharomyces</taxon>
    </lineage>
</organism>
<protein>
    <recommendedName>
        <fullName>Pre-tRNA-processing protein PTA1</fullName>
    </recommendedName>
</protein>
<gene>
    <name type="primary">PTA1</name>
    <name type="ordered locus">YAL043C</name>
    <name type="ORF">FUN39</name>
</gene>
<name>PTA1_YEAST</name>
<keyword id="KW-0507">mRNA processing</keyword>
<keyword id="KW-0539">Nucleus</keyword>
<keyword id="KW-0597">Phosphoprotein</keyword>
<keyword id="KW-1185">Reference proteome</keyword>
<keyword id="KW-0819">tRNA processing</keyword>
<proteinExistence type="evidence at protein level"/>
<feature type="chain" id="PRO_0000097086" description="Pre-tRNA-processing protein PTA1">
    <location>
        <begin position="1"/>
        <end position="785"/>
    </location>
</feature>
<feature type="region of interest" description="Disordered" evidence="1">
    <location>
        <begin position="487"/>
        <end position="544"/>
    </location>
</feature>
<feature type="compositionally biased region" description="Acidic residues" evidence="1">
    <location>
        <begin position="502"/>
        <end position="513"/>
    </location>
</feature>
<feature type="compositionally biased region" description="Acidic residues" evidence="1">
    <location>
        <begin position="530"/>
        <end position="542"/>
    </location>
</feature>
<feature type="modified residue" description="Phosphoserine" evidence="4">
    <location>
        <position position="500"/>
    </location>
</feature>
<sequence length="785" mass="88473">MSSAEMEQLLQAKTLAMHNNPTEMLPKVLETTASMYHNGNLSKLKLPLAKFFTQLVLDVVSMDSPIANTERPFIAAQYLPLLLAMAQSTADVLVYKNIVLIMCASYPLVLDLVAKTSNQEMFDQLCMLKKFVLSHWRTAYPLRATVDDETDVEQWLAQIDQNIGVKLATIKFISEVVLSQTKSPSGNEINSSTIPDNHPVLNKPALESEAKRLLDMLLNYLIEEQYMVSSVFIGIINSLSFVIKRRPQTTIRILSGLLRFNVDAKFPLEGKSDLNYKLSKRFVERAYKNFVQFGLKNQIITKSLSSGSGSSIYSKLTKISQTLHVIGEETKSKGILNFDPSKGNSKKTLSRQDKLKYISLWKRQLSALLSTLGVSTKTPTPVSAPATGSSTENMLDQLKILQKYTLNKASHQGNTFFNNSPKPISNTYSSVYSLMNSSNSNQDVTQLPNDILIKLSTEAILQMDSTKLITGLSIVASRYTDLMNTYINSVPSSSSSKRKSDDDDDGNDNEEVGNDGPTANSKKIKMETEPLAEEPEEPEDDDRMQKMLQEEESAQEISGDANKSTSAIKEIAPPFEPDSLTQDEKLKYLSKLTKKLFELSGRQDTTRAKSSSSSSILLDDDDSSSWLHVLIRLVTRGIEAQEASDLIREELLGFFIQDFEQRVSLIIEWLNEEWFFQTSLHQDPSNYKKWSLRVLESLGPFLENKHRRFFIRLMSELPSLQSDHLEALKPICLDPARSSLGFQTLKFLIMFRPPVQDTVRDLLHQLKQEDEGLHKQCDSLLDRLK</sequence>
<dbReference type="EMBL" id="M95673">
    <property type="protein sequence ID" value="AAA34919.1"/>
    <property type="molecule type" value="Genomic_DNA"/>
</dbReference>
<dbReference type="EMBL" id="U12980">
    <property type="protein sequence ID" value="AAC04988.1"/>
    <property type="molecule type" value="Genomic_DNA"/>
</dbReference>
<dbReference type="EMBL" id="BK006935">
    <property type="protein sequence ID" value="DAA06943.1"/>
    <property type="molecule type" value="Genomic_DNA"/>
</dbReference>
<dbReference type="PIR" id="S31299">
    <property type="entry name" value="S31299"/>
</dbReference>
<dbReference type="RefSeq" id="NP_009356.1">
    <property type="nucleotide sequence ID" value="NM_001178188.1"/>
</dbReference>
<dbReference type="SMR" id="Q01329"/>
<dbReference type="BioGRID" id="31784">
    <property type="interactions" value="171"/>
</dbReference>
<dbReference type="ComplexPortal" id="CPX-1053">
    <property type="entry name" value="Cleavage and polyadenylation specificity factor complex"/>
</dbReference>
<dbReference type="DIP" id="DIP-2469N"/>
<dbReference type="FunCoup" id="Q01329">
    <property type="interactions" value="290"/>
</dbReference>
<dbReference type="IntAct" id="Q01329">
    <property type="interactions" value="32"/>
</dbReference>
<dbReference type="MINT" id="Q01329"/>
<dbReference type="STRING" id="4932.YAL043C"/>
<dbReference type="GlyGen" id="Q01329">
    <property type="glycosylation" value="1 site, 1 O-linked glycan (1 site)"/>
</dbReference>
<dbReference type="iPTMnet" id="Q01329"/>
<dbReference type="PaxDb" id="4932-YAL043C"/>
<dbReference type="PeptideAtlas" id="Q01329"/>
<dbReference type="EnsemblFungi" id="YAL043C_mRNA">
    <property type="protein sequence ID" value="YAL043C"/>
    <property type="gene ID" value="YAL043C"/>
</dbReference>
<dbReference type="GeneID" id="851255"/>
<dbReference type="KEGG" id="sce:YAL043C"/>
<dbReference type="AGR" id="SGD:S000000041"/>
<dbReference type="SGD" id="S000000041">
    <property type="gene designation" value="PTA1"/>
</dbReference>
<dbReference type="VEuPathDB" id="FungiDB:YAL043C"/>
<dbReference type="eggNOG" id="KOG1895">
    <property type="taxonomic scope" value="Eukaryota"/>
</dbReference>
<dbReference type="GeneTree" id="ENSGT00390000017045"/>
<dbReference type="HOGENOM" id="CLU_021804_0_0_1"/>
<dbReference type="InParanoid" id="Q01329"/>
<dbReference type="OMA" id="YKNFVQF"/>
<dbReference type="OrthoDB" id="331600at2759"/>
<dbReference type="BioCyc" id="YEAST:G3O-28851-MONOMER"/>
<dbReference type="Reactome" id="R-SCE-77595">
    <property type="pathway name" value="Processing of Intronless Pre-mRNAs"/>
</dbReference>
<dbReference type="BioGRID-ORCS" id="851255">
    <property type="hits" value="7 hits in 10 CRISPR screens"/>
</dbReference>
<dbReference type="PRO" id="PR:Q01329"/>
<dbReference type="Proteomes" id="UP000002311">
    <property type="component" value="Chromosome I"/>
</dbReference>
<dbReference type="RNAct" id="Q01329">
    <property type="molecule type" value="protein"/>
</dbReference>
<dbReference type="GO" id="GO:0005847">
    <property type="term" value="C:mRNA cleavage and polyadenylation specificity factor complex"/>
    <property type="evidence" value="ECO:0000314"/>
    <property type="project" value="SGD"/>
</dbReference>
<dbReference type="GO" id="GO:0005634">
    <property type="term" value="C:nucleus"/>
    <property type="evidence" value="ECO:0000303"/>
    <property type="project" value="ComplexPortal"/>
</dbReference>
<dbReference type="GO" id="GO:0006397">
    <property type="term" value="P:mRNA processing"/>
    <property type="evidence" value="ECO:0007669"/>
    <property type="project" value="UniProtKB-KW"/>
</dbReference>
<dbReference type="GO" id="GO:0030846">
    <property type="term" value="P:termination of RNA polymerase II transcription, poly(A)-coupled"/>
    <property type="evidence" value="ECO:0000353"/>
    <property type="project" value="SGD"/>
</dbReference>
<dbReference type="GO" id="GO:0008033">
    <property type="term" value="P:tRNA processing"/>
    <property type="evidence" value="ECO:0000315"/>
    <property type="project" value="SGD"/>
</dbReference>
<dbReference type="FunFam" id="1.25.10.10:FF:000664">
    <property type="entry name" value="Pta1p"/>
    <property type="match status" value="1"/>
</dbReference>
<dbReference type="Gene3D" id="1.25.10.10">
    <property type="entry name" value="Leucine-rich Repeat Variant"/>
    <property type="match status" value="1"/>
</dbReference>
<dbReference type="InterPro" id="IPR011989">
    <property type="entry name" value="ARM-like"/>
</dbReference>
<dbReference type="InterPro" id="IPR021850">
    <property type="entry name" value="Symplekin/Pta1"/>
</dbReference>
<dbReference type="InterPro" id="IPR032460">
    <property type="entry name" value="Symplekin/Pta1_N"/>
</dbReference>
<dbReference type="PANTHER" id="PTHR15245:SF20">
    <property type="entry name" value="SYMPLEKIN"/>
    <property type="match status" value="1"/>
</dbReference>
<dbReference type="PANTHER" id="PTHR15245">
    <property type="entry name" value="SYMPLEKIN-RELATED"/>
    <property type="match status" value="1"/>
</dbReference>
<dbReference type="Pfam" id="PF11935">
    <property type="entry name" value="SYMPK_PTA1_N"/>
    <property type="match status" value="1"/>
</dbReference>
<evidence type="ECO:0000256" key="1">
    <source>
        <dbReference type="SAM" id="MobiDB-lite"/>
    </source>
</evidence>
<evidence type="ECO:0000269" key="2">
    <source>
    </source>
</evidence>
<evidence type="ECO:0000269" key="3">
    <source>
    </source>
</evidence>
<evidence type="ECO:0007744" key="4">
    <source>
    </source>
</evidence>
<reference key="1">
    <citation type="journal article" date="1992" name="Mol. Cell. Biol.">
        <title>PTA1, an essential gene of Saccharomyces cerevisiae affecting pre-tRNA processing.</title>
        <authorList>
            <person name="O'Connor J.P."/>
            <person name="Peebles C.L."/>
        </authorList>
    </citation>
    <scope>NUCLEOTIDE SEQUENCE [GENOMIC DNA]</scope>
</reference>
<reference key="2">
    <citation type="journal article" date="1995" name="Proc. Natl. Acad. Sci. U.S.A.">
        <title>The nucleotide sequence of chromosome I from Saccharomyces cerevisiae.</title>
        <authorList>
            <person name="Bussey H."/>
            <person name="Kaback D.B."/>
            <person name="Zhong W.-W."/>
            <person name="Vo D.H."/>
            <person name="Clark M.W."/>
            <person name="Fortin N."/>
            <person name="Hall J."/>
            <person name="Ouellette B.F.F."/>
            <person name="Keng T."/>
            <person name="Barton A.B."/>
            <person name="Su Y."/>
            <person name="Davies C.J."/>
            <person name="Storms R.K."/>
        </authorList>
    </citation>
    <scope>NUCLEOTIDE SEQUENCE [LARGE SCALE GENOMIC DNA]</scope>
    <source>
        <strain>ATCC 204508 / S288c</strain>
    </source>
</reference>
<reference key="3">
    <citation type="journal article" date="2014" name="G3 (Bethesda)">
        <title>The reference genome sequence of Saccharomyces cerevisiae: Then and now.</title>
        <authorList>
            <person name="Engel S.R."/>
            <person name="Dietrich F.S."/>
            <person name="Fisk D.G."/>
            <person name="Binkley G."/>
            <person name="Balakrishnan R."/>
            <person name="Costanzo M.C."/>
            <person name="Dwight S.S."/>
            <person name="Hitz B.C."/>
            <person name="Karra K."/>
            <person name="Nash R.S."/>
            <person name="Weng S."/>
            <person name="Wong E.D."/>
            <person name="Lloyd P."/>
            <person name="Skrzypek M.S."/>
            <person name="Miyasato S.R."/>
            <person name="Simison M."/>
            <person name="Cherry J.M."/>
        </authorList>
    </citation>
    <scope>GENOME REANNOTATION</scope>
    <source>
        <strain>ATCC 204508 / S288c</strain>
    </source>
</reference>
<reference key="4">
    <citation type="journal article" date="2003" name="J. Biol. Chem.">
        <title>Organization and function of APT, a subcomplex of the yeast cleavage and polyadenylation factor involved in the formation of mRNA and small nucleolar RNA 3'-ends.</title>
        <authorList>
            <person name="Nedea E."/>
            <person name="He X."/>
            <person name="Kim M."/>
            <person name="Pootoolal J."/>
            <person name="Zhong G."/>
            <person name="Canadien V."/>
            <person name="Hughes T."/>
            <person name="Buratowski S."/>
            <person name="Moore C.L."/>
            <person name="Greenblatt J."/>
        </authorList>
    </citation>
    <scope>IDENTIFICATION IN THE CPF COMPLEX</scope>
    <scope>COMPOSITION OF THE APT COMPLEX</scope>
    <scope>SUBCELLULAR LOCATION</scope>
    <scope>IDENTIFICATION BY MASS SPECTROMETRY</scope>
</reference>
<reference key="5">
    <citation type="journal article" date="2003" name="Nature">
        <title>Global analysis of protein expression in yeast.</title>
        <authorList>
            <person name="Ghaemmaghami S."/>
            <person name="Huh W.-K."/>
            <person name="Bower K."/>
            <person name="Howson R.W."/>
            <person name="Belle A."/>
            <person name="Dephoure N."/>
            <person name="O'Shea E.K."/>
            <person name="Weissman J.S."/>
        </authorList>
    </citation>
    <scope>LEVEL OF PROTEIN EXPRESSION [LARGE SCALE ANALYSIS]</scope>
</reference>
<reference key="6">
    <citation type="journal article" date="2008" name="Mol. Cell. Proteomics">
        <title>A multidimensional chromatography technology for in-depth phosphoproteome analysis.</title>
        <authorList>
            <person name="Albuquerque C.P."/>
            <person name="Smolka M.B."/>
            <person name="Payne S.H."/>
            <person name="Bafna V."/>
            <person name="Eng J."/>
            <person name="Zhou H."/>
        </authorList>
    </citation>
    <scope>IDENTIFICATION BY MASS SPECTROMETRY [LARGE SCALE ANALYSIS]</scope>
</reference>
<reference key="7">
    <citation type="journal article" date="2009" name="Science">
        <title>Global analysis of Cdk1 substrate phosphorylation sites provides insights into evolution.</title>
        <authorList>
            <person name="Holt L.J."/>
            <person name="Tuch B.B."/>
            <person name="Villen J."/>
            <person name="Johnson A.D."/>
            <person name="Gygi S.P."/>
            <person name="Morgan D.O."/>
        </authorList>
    </citation>
    <scope>PHOSPHORYLATION [LARGE SCALE ANALYSIS] AT SER-500</scope>
    <scope>IDENTIFICATION BY MASS SPECTROMETRY [LARGE SCALE ANALYSIS]</scope>
</reference>
<accession>Q01329</accession>
<accession>D6VPH3</accession>